<comment type="function">
    <text evidence="1">Part of the ABC transporter complex MetNIQ involved in methionine import. Responsible for energy coupling to the transport system.</text>
</comment>
<comment type="catalytic activity">
    <reaction evidence="1">
        <text>L-methionine(out) + ATP + H2O = L-methionine(in) + ADP + phosphate + H(+)</text>
        <dbReference type="Rhea" id="RHEA:29779"/>
        <dbReference type="ChEBI" id="CHEBI:15377"/>
        <dbReference type="ChEBI" id="CHEBI:15378"/>
        <dbReference type="ChEBI" id="CHEBI:30616"/>
        <dbReference type="ChEBI" id="CHEBI:43474"/>
        <dbReference type="ChEBI" id="CHEBI:57844"/>
        <dbReference type="ChEBI" id="CHEBI:456216"/>
        <dbReference type="EC" id="7.4.2.11"/>
    </reaction>
</comment>
<comment type="catalytic activity">
    <reaction evidence="1">
        <text>D-methionine(out) + ATP + H2O = D-methionine(in) + ADP + phosphate + H(+)</text>
        <dbReference type="Rhea" id="RHEA:29767"/>
        <dbReference type="ChEBI" id="CHEBI:15377"/>
        <dbReference type="ChEBI" id="CHEBI:15378"/>
        <dbReference type="ChEBI" id="CHEBI:30616"/>
        <dbReference type="ChEBI" id="CHEBI:43474"/>
        <dbReference type="ChEBI" id="CHEBI:57932"/>
        <dbReference type="ChEBI" id="CHEBI:456216"/>
        <dbReference type="EC" id="7.4.2.11"/>
    </reaction>
</comment>
<comment type="subunit">
    <text evidence="1">The complex is composed of two ATP-binding proteins (MetN), two transmembrane proteins (MetI) and a solute-binding protein (MetQ).</text>
</comment>
<comment type="subcellular location">
    <subcellularLocation>
        <location evidence="1">Cell membrane</location>
        <topology evidence="1">Peripheral membrane protein</topology>
    </subcellularLocation>
</comment>
<comment type="similarity">
    <text evidence="1">Belongs to the ABC transporter superfamily. Methionine importer (TC 3.A.1.24) family.</text>
</comment>
<protein>
    <recommendedName>
        <fullName evidence="1">Methionine import ATP-binding protein MetN 1</fullName>
        <ecNumber evidence="1">7.4.2.11</ecNumber>
    </recommendedName>
</protein>
<gene>
    <name evidence="1" type="primary">metN1</name>
    <name type="ordered locus">SAR0461</name>
</gene>
<reference key="1">
    <citation type="journal article" date="2004" name="Proc. Natl. Acad. Sci. U.S.A.">
        <title>Complete genomes of two clinical Staphylococcus aureus strains: evidence for the rapid evolution of virulence and drug resistance.</title>
        <authorList>
            <person name="Holden M.T.G."/>
            <person name="Feil E.J."/>
            <person name="Lindsay J.A."/>
            <person name="Peacock S.J."/>
            <person name="Day N.P.J."/>
            <person name="Enright M.C."/>
            <person name="Foster T.J."/>
            <person name="Moore C.E."/>
            <person name="Hurst L."/>
            <person name="Atkin R."/>
            <person name="Barron A."/>
            <person name="Bason N."/>
            <person name="Bentley S.D."/>
            <person name="Chillingworth C."/>
            <person name="Chillingworth T."/>
            <person name="Churcher C."/>
            <person name="Clark L."/>
            <person name="Corton C."/>
            <person name="Cronin A."/>
            <person name="Doggett J."/>
            <person name="Dowd L."/>
            <person name="Feltwell T."/>
            <person name="Hance Z."/>
            <person name="Harris B."/>
            <person name="Hauser H."/>
            <person name="Holroyd S."/>
            <person name="Jagels K."/>
            <person name="James K.D."/>
            <person name="Lennard N."/>
            <person name="Line A."/>
            <person name="Mayes R."/>
            <person name="Moule S."/>
            <person name="Mungall K."/>
            <person name="Ormond D."/>
            <person name="Quail M.A."/>
            <person name="Rabbinowitsch E."/>
            <person name="Rutherford K.M."/>
            <person name="Sanders M."/>
            <person name="Sharp S."/>
            <person name="Simmonds M."/>
            <person name="Stevens K."/>
            <person name="Whitehead S."/>
            <person name="Barrell B.G."/>
            <person name="Spratt B.G."/>
            <person name="Parkhill J."/>
        </authorList>
    </citation>
    <scope>NUCLEOTIDE SEQUENCE [LARGE SCALE GENOMIC DNA]</scope>
    <source>
        <strain>MRSA252</strain>
    </source>
</reference>
<evidence type="ECO:0000255" key="1">
    <source>
        <dbReference type="HAMAP-Rule" id="MF_01719"/>
    </source>
</evidence>
<keyword id="KW-0029">Amino-acid transport</keyword>
<keyword id="KW-0067">ATP-binding</keyword>
<keyword id="KW-1003">Cell membrane</keyword>
<keyword id="KW-0472">Membrane</keyword>
<keyword id="KW-0547">Nucleotide-binding</keyword>
<keyword id="KW-1278">Translocase</keyword>
<keyword id="KW-0813">Transport</keyword>
<dbReference type="EC" id="7.4.2.11" evidence="1"/>
<dbReference type="EMBL" id="BX571856">
    <property type="protein sequence ID" value="CAG39482.1"/>
    <property type="molecule type" value="Genomic_DNA"/>
</dbReference>
<dbReference type="RefSeq" id="WP_000569267.1">
    <property type="nucleotide sequence ID" value="NC_002952.2"/>
</dbReference>
<dbReference type="SMR" id="Q6GJL2"/>
<dbReference type="KEGG" id="sar:SAR0461"/>
<dbReference type="HOGENOM" id="CLU_000604_1_3_9"/>
<dbReference type="Proteomes" id="UP000000596">
    <property type="component" value="Chromosome"/>
</dbReference>
<dbReference type="GO" id="GO:0005886">
    <property type="term" value="C:plasma membrane"/>
    <property type="evidence" value="ECO:0007669"/>
    <property type="project" value="UniProtKB-SubCell"/>
</dbReference>
<dbReference type="GO" id="GO:0033232">
    <property type="term" value="F:ABC-type D-methionine transporter activity"/>
    <property type="evidence" value="ECO:0007669"/>
    <property type="project" value="UniProtKB-EC"/>
</dbReference>
<dbReference type="GO" id="GO:0005524">
    <property type="term" value="F:ATP binding"/>
    <property type="evidence" value="ECO:0007669"/>
    <property type="project" value="UniProtKB-KW"/>
</dbReference>
<dbReference type="GO" id="GO:0016887">
    <property type="term" value="F:ATP hydrolysis activity"/>
    <property type="evidence" value="ECO:0007669"/>
    <property type="project" value="InterPro"/>
</dbReference>
<dbReference type="CDD" id="cd03258">
    <property type="entry name" value="ABC_MetN_methionine_transporter"/>
    <property type="match status" value="1"/>
</dbReference>
<dbReference type="FunFam" id="3.40.50.300:FF:000056">
    <property type="entry name" value="Cell division ATP-binding protein FtsE"/>
    <property type="match status" value="1"/>
</dbReference>
<dbReference type="Gene3D" id="3.30.70.260">
    <property type="match status" value="1"/>
</dbReference>
<dbReference type="Gene3D" id="3.40.50.300">
    <property type="entry name" value="P-loop containing nucleotide triphosphate hydrolases"/>
    <property type="match status" value="1"/>
</dbReference>
<dbReference type="InterPro" id="IPR003593">
    <property type="entry name" value="AAA+_ATPase"/>
</dbReference>
<dbReference type="InterPro" id="IPR003439">
    <property type="entry name" value="ABC_transporter-like_ATP-bd"/>
</dbReference>
<dbReference type="InterPro" id="IPR017871">
    <property type="entry name" value="ABC_transporter-like_CS"/>
</dbReference>
<dbReference type="InterPro" id="IPR045865">
    <property type="entry name" value="ACT-like_dom_sf"/>
</dbReference>
<dbReference type="InterPro" id="IPR041701">
    <property type="entry name" value="MetN_ABC"/>
</dbReference>
<dbReference type="InterPro" id="IPR050086">
    <property type="entry name" value="MetN_ABC_transporter-like"/>
</dbReference>
<dbReference type="InterPro" id="IPR018449">
    <property type="entry name" value="NIL_domain"/>
</dbReference>
<dbReference type="InterPro" id="IPR027417">
    <property type="entry name" value="P-loop_NTPase"/>
</dbReference>
<dbReference type="PANTHER" id="PTHR43166">
    <property type="entry name" value="AMINO ACID IMPORT ATP-BINDING PROTEIN"/>
    <property type="match status" value="1"/>
</dbReference>
<dbReference type="PANTHER" id="PTHR43166:SF30">
    <property type="entry name" value="METHIONINE IMPORT ATP-BINDING PROTEIN METN"/>
    <property type="match status" value="1"/>
</dbReference>
<dbReference type="Pfam" id="PF00005">
    <property type="entry name" value="ABC_tran"/>
    <property type="match status" value="1"/>
</dbReference>
<dbReference type="Pfam" id="PF09383">
    <property type="entry name" value="NIL"/>
    <property type="match status" value="1"/>
</dbReference>
<dbReference type="SMART" id="SM00382">
    <property type="entry name" value="AAA"/>
    <property type="match status" value="1"/>
</dbReference>
<dbReference type="SMART" id="SM00930">
    <property type="entry name" value="NIL"/>
    <property type="match status" value="1"/>
</dbReference>
<dbReference type="SUPFAM" id="SSF55021">
    <property type="entry name" value="ACT-like"/>
    <property type="match status" value="1"/>
</dbReference>
<dbReference type="SUPFAM" id="SSF52540">
    <property type="entry name" value="P-loop containing nucleoside triphosphate hydrolases"/>
    <property type="match status" value="1"/>
</dbReference>
<dbReference type="PROSITE" id="PS00211">
    <property type="entry name" value="ABC_TRANSPORTER_1"/>
    <property type="match status" value="1"/>
</dbReference>
<dbReference type="PROSITE" id="PS50893">
    <property type="entry name" value="ABC_TRANSPORTER_2"/>
    <property type="match status" value="1"/>
</dbReference>
<dbReference type="PROSITE" id="PS51264">
    <property type="entry name" value="METN"/>
    <property type="match status" value="1"/>
</dbReference>
<name>METN1_STAAR</name>
<feature type="chain" id="PRO_0000270391" description="Methionine import ATP-binding protein MetN 1">
    <location>
        <begin position="1"/>
        <end position="341"/>
    </location>
</feature>
<feature type="domain" description="ABC transporter" evidence="1">
    <location>
        <begin position="2"/>
        <end position="241"/>
    </location>
</feature>
<feature type="binding site" evidence="1">
    <location>
        <begin position="38"/>
        <end position="45"/>
    </location>
    <ligand>
        <name>ATP</name>
        <dbReference type="ChEBI" id="CHEBI:30616"/>
    </ligand>
</feature>
<sequence>MIEFRQVSKSFHKKKQTIDALKDVSFTVNRNDIFGVIGYSGAGKSTLVRLVNHLEAASNGQVIVDGHDITNYSDKMMRDIKKDIGMIFQHFNLLNSATVFKNVAMPLILSKKSKTEIKQRVTEMLEFVGLSDKKDQFPDELSGGQKQRVAIARALVTNPKILLCDEATSALDPATTASILTLLKNVNQTFGITIMMITHEMRVIKDICNRVAVMEKGQVVETGTVKEVFSHPKTTIAQNFVSTVIQTEPSPSLIRRLNDKQVGDFKDYKIFVEETQMTQPIINDLIQICGREVKILFSSMSEIQGNTVCYMWLRFNMDQQFDGTAINQYFKEKNIQFEEVH</sequence>
<organism>
    <name type="scientific">Staphylococcus aureus (strain MRSA252)</name>
    <dbReference type="NCBI Taxonomy" id="282458"/>
    <lineage>
        <taxon>Bacteria</taxon>
        <taxon>Bacillati</taxon>
        <taxon>Bacillota</taxon>
        <taxon>Bacilli</taxon>
        <taxon>Bacillales</taxon>
        <taxon>Staphylococcaceae</taxon>
        <taxon>Staphylococcus</taxon>
    </lineage>
</organism>
<accession>Q6GJL2</accession>
<proteinExistence type="inferred from homology"/>